<comment type="function">
    <text evidence="1">Mediates visceral muscle contractile activity (myotropic activity).</text>
</comment>
<comment type="subcellular location">
    <subcellularLocation>
        <location evidence="6">Secreted</location>
    </subcellularLocation>
</comment>
<comment type="similarity">
    <text evidence="2">Belongs to the periviscerokinin family.</text>
</comment>
<protein>
    <recommendedName>
        <fullName evidence="4">CAPA-Periviscerokinin-1</fullName>
        <shortName evidence="4">CAPA-PVK-1</shortName>
    </recommendedName>
</protein>
<proteinExistence type="evidence at protein level"/>
<sequence length="11" mass="1169">EAAGLLPFPRV</sequence>
<keyword id="KW-0027">Amidation</keyword>
<keyword id="KW-0903">Direct protein sequencing</keyword>
<keyword id="KW-0527">Neuropeptide</keyword>
<keyword id="KW-0964">Secreted</keyword>
<name>PVK1_HEMMO</name>
<accession>B3A0B7</accession>
<dbReference type="GO" id="GO:0005576">
    <property type="term" value="C:extracellular region"/>
    <property type="evidence" value="ECO:0007669"/>
    <property type="project" value="UniProtKB-SubCell"/>
</dbReference>
<dbReference type="GO" id="GO:0007218">
    <property type="term" value="P:neuropeptide signaling pathway"/>
    <property type="evidence" value="ECO:0007669"/>
    <property type="project" value="UniProtKB-KW"/>
</dbReference>
<dbReference type="InterPro" id="IPR013231">
    <property type="entry name" value="Periviscerokinin"/>
</dbReference>
<dbReference type="Pfam" id="PF08259">
    <property type="entry name" value="Periviscerokin"/>
    <property type="match status" value="1"/>
</dbReference>
<feature type="peptide" id="PRO_0000421635" description="CAPA-Periviscerokinin-1" evidence="3">
    <location>
        <begin position="1"/>
        <end position="11"/>
    </location>
</feature>
<feature type="modified residue" description="Valine amide" evidence="3">
    <location>
        <position position="11"/>
    </location>
</feature>
<organism>
    <name type="scientific">Hemilobophasma montaguense</name>
    <name type="common">Gladiator</name>
    <name type="synonym">Heel-walker</name>
    <dbReference type="NCBI Taxonomy" id="253130"/>
    <lineage>
        <taxon>Eukaryota</taxon>
        <taxon>Metazoa</taxon>
        <taxon>Ecdysozoa</taxon>
        <taxon>Arthropoda</taxon>
        <taxon>Hexapoda</taxon>
        <taxon>Insecta</taxon>
        <taxon>Pterygota</taxon>
        <taxon>Neoptera</taxon>
        <taxon>Polyneoptera</taxon>
        <taxon>Mantophasmatodea</taxon>
        <taxon>Austrophasmatidae</taxon>
        <taxon>Hemilobophasma</taxon>
    </lineage>
</organism>
<reference evidence="5" key="1">
    <citation type="journal article" date="2012" name="Syst. Biol.">
        <title>Peptidomics-based phylogeny and biogeography of Mantophasmatodea (Hexapoda).</title>
        <authorList>
            <person name="Predel R."/>
            <person name="Neupert S."/>
            <person name="Huetteroth W."/>
            <person name="Kahnt J."/>
            <person name="Waidelich D."/>
            <person name="Roth S."/>
        </authorList>
    </citation>
    <scope>PROTEIN SEQUENCE</scope>
    <scope>AMIDATION AT VAL-11</scope>
    <source>
        <tissue evidence="3">Abdominal perisympathetic organs</tissue>
    </source>
</reference>
<evidence type="ECO:0000250" key="1">
    <source>
        <dbReference type="UniProtKB" id="P83923"/>
    </source>
</evidence>
<evidence type="ECO:0000255" key="2"/>
<evidence type="ECO:0000269" key="3">
    <source>
    </source>
</evidence>
<evidence type="ECO:0000303" key="4">
    <source>
    </source>
</evidence>
<evidence type="ECO:0000305" key="5"/>
<evidence type="ECO:0000305" key="6">
    <source>
    </source>
</evidence>